<protein>
    <recommendedName>
        <fullName>Type-2Bb cytolytic delta-endotoxin</fullName>
    </recommendedName>
    <alternativeName>
        <fullName>30 kDa cytolytic toxin</fullName>
    </alternativeName>
</protein>
<accession>O32322</accession>
<dbReference type="EMBL" id="U82519">
    <property type="protein sequence ID" value="AAB93477.1"/>
    <property type="molecule type" value="Genomic_DNA"/>
</dbReference>
<dbReference type="RefSeq" id="WP_086404868.1">
    <property type="nucleotide sequence ID" value="NZ_MOOS01000198.1"/>
</dbReference>
<dbReference type="SMR" id="O32322"/>
<dbReference type="GO" id="GO:0005576">
    <property type="term" value="C:extracellular region"/>
    <property type="evidence" value="ECO:0007669"/>
    <property type="project" value="InterPro"/>
</dbReference>
<dbReference type="GO" id="GO:0090729">
    <property type="term" value="F:toxin activity"/>
    <property type="evidence" value="ECO:0007669"/>
    <property type="project" value="UniProtKB-KW"/>
</dbReference>
<dbReference type="GO" id="GO:0030435">
    <property type="term" value="P:sporulation resulting in formation of a cellular spore"/>
    <property type="evidence" value="ECO:0007669"/>
    <property type="project" value="UniProtKB-KW"/>
</dbReference>
<dbReference type="Gene3D" id="3.40.198.10">
    <property type="entry name" value="Delta-endotoxin CytB-like"/>
    <property type="match status" value="1"/>
</dbReference>
<dbReference type="InterPro" id="IPR035918">
    <property type="entry name" value="CytB_endotoxin-like_sf"/>
</dbReference>
<dbReference type="InterPro" id="IPR001615">
    <property type="entry name" value="Endotoxin_CytB"/>
</dbReference>
<dbReference type="Pfam" id="PF01338">
    <property type="entry name" value="Bac_thur_toxin"/>
    <property type="match status" value="1"/>
</dbReference>
<dbReference type="SUPFAM" id="SSF55676">
    <property type="entry name" value="CytB endotoxin-like"/>
    <property type="match status" value="1"/>
</dbReference>
<sequence length="263" mass="30059">MYTKNLNSLEINEDYQYSRPIIKKPFRHITLTVPSSDIASFNEIFYLEPQYVAQALRLTNTFQAAIDPLTLNFDFEKALQIANGLPNAGITGTLNQSVIQQTIEISVMISQIKEIIRNVLGLVINSTNFWNSVLAAITNTFTNLEPQVDENWIVWRNLSATHTSYYYKILFSIQNEDTGAFMAVLPIAFEITVDVQKQQLLFITIRDSARYEVKMKALTVVQLLDSYNAPIIDVFNVHNYGLYQSNHPNHHILQNLNLNKIKG</sequence>
<keyword id="KW-0903">Direct protein sequencing</keyword>
<keyword id="KW-0749">Sporulation</keyword>
<keyword id="KW-0800">Toxin</keyword>
<keyword id="KW-0843">Virulence</keyword>
<name>CT2BB_BACTJ</name>
<reference key="1">
    <citation type="journal article" date="1997" name="Appl. Environ. Microbiol.">
        <title>Cloning and characterization of a cytolytic and mosquitocidal delta-endotoxin from Bacillus thuringiensis subsp. jegathesan.</title>
        <authorList>
            <person name="Cheong H."/>
            <person name="Gill S.S."/>
        </authorList>
    </citation>
    <scope>NUCLEOTIDE SEQUENCE [GENOMIC DNA]</scope>
    <scope>PARTIAL PROTEIN SEQUENCE</scope>
</reference>
<comment type="function">
    <text evidence="1">Kills the larvae of dipteran insects by making pores in the epithelial cell membrane of the insect midgut.</text>
</comment>
<comment type="developmental stage">
    <text>The crystal protein is produced during sporulation and is accumulated both as an inclusion and as part of the spore coat.</text>
</comment>
<comment type="PTM">
    <text evidence="1">Active after proteolytic processing.</text>
</comment>
<comment type="similarity">
    <text evidence="2">Belongs to the cyt1/cyt2 endotoxin family.</text>
</comment>
<proteinExistence type="evidence at protein level"/>
<feature type="chain" id="PRO_0000174110" description="Type-2Bb cytolytic delta-endotoxin">
    <location>
        <begin position="1"/>
        <end position="263"/>
    </location>
</feature>
<gene>
    <name type="primary">cyt2Bb1</name>
</gene>
<organism>
    <name type="scientific">Bacillus thuringiensis subsp. jegathesan</name>
    <dbReference type="NCBI Taxonomy" id="56955"/>
    <lineage>
        <taxon>Bacteria</taxon>
        <taxon>Bacillati</taxon>
        <taxon>Bacillota</taxon>
        <taxon>Bacilli</taxon>
        <taxon>Bacillales</taxon>
        <taxon>Bacillaceae</taxon>
        <taxon>Bacillus</taxon>
        <taxon>Bacillus cereus group</taxon>
    </lineage>
</organism>
<evidence type="ECO:0000250" key="1"/>
<evidence type="ECO:0000305" key="2"/>